<comment type="function">
    <text evidence="1">Catalyzes the NADPH-dependent reduction of L-glutamate 5-phosphate into L-glutamate 5-semialdehyde and phosphate. The product spontaneously undergoes cyclization to form 1-pyrroline-5-carboxylate.</text>
</comment>
<comment type="catalytic activity">
    <reaction evidence="1">
        <text>L-glutamate 5-semialdehyde + phosphate + NADP(+) = L-glutamyl 5-phosphate + NADPH + H(+)</text>
        <dbReference type="Rhea" id="RHEA:19541"/>
        <dbReference type="ChEBI" id="CHEBI:15378"/>
        <dbReference type="ChEBI" id="CHEBI:43474"/>
        <dbReference type="ChEBI" id="CHEBI:57783"/>
        <dbReference type="ChEBI" id="CHEBI:58066"/>
        <dbReference type="ChEBI" id="CHEBI:58274"/>
        <dbReference type="ChEBI" id="CHEBI:58349"/>
        <dbReference type="EC" id="1.2.1.41"/>
    </reaction>
</comment>
<comment type="pathway">
    <text evidence="1">Amino-acid biosynthesis; L-proline biosynthesis; L-glutamate 5-semialdehyde from L-glutamate: step 2/2.</text>
</comment>
<comment type="subcellular location">
    <subcellularLocation>
        <location evidence="1">Cytoplasm</location>
    </subcellularLocation>
</comment>
<comment type="similarity">
    <text evidence="1">Belongs to the gamma-glutamyl phosphate reductase family.</text>
</comment>
<protein>
    <recommendedName>
        <fullName evidence="1">Gamma-glutamyl phosphate reductase</fullName>
        <shortName evidence="1">GPR</shortName>
        <ecNumber evidence="1">1.2.1.41</ecNumber>
    </recommendedName>
    <alternativeName>
        <fullName evidence="1">Glutamate-5-semialdehyde dehydrogenase</fullName>
    </alternativeName>
    <alternativeName>
        <fullName evidence="1">Glutamyl-gamma-semialdehyde dehydrogenase</fullName>
        <shortName evidence="1">GSA dehydrogenase</shortName>
    </alternativeName>
</protein>
<keyword id="KW-0028">Amino-acid biosynthesis</keyword>
<keyword id="KW-0963">Cytoplasm</keyword>
<keyword id="KW-0521">NADP</keyword>
<keyword id="KW-0560">Oxidoreductase</keyword>
<keyword id="KW-0641">Proline biosynthesis</keyword>
<gene>
    <name evidence="1" type="primary">proA</name>
    <name type="ordered locus">PSEEN4830</name>
</gene>
<feature type="chain" id="PRO_1000049983" description="Gamma-glutamyl phosphate reductase">
    <location>
        <begin position="1"/>
        <end position="423"/>
    </location>
</feature>
<accession>Q1I4F0</accession>
<organism>
    <name type="scientific">Pseudomonas entomophila (strain L48)</name>
    <dbReference type="NCBI Taxonomy" id="384676"/>
    <lineage>
        <taxon>Bacteria</taxon>
        <taxon>Pseudomonadati</taxon>
        <taxon>Pseudomonadota</taxon>
        <taxon>Gammaproteobacteria</taxon>
        <taxon>Pseudomonadales</taxon>
        <taxon>Pseudomonadaceae</taxon>
        <taxon>Pseudomonas</taxon>
    </lineage>
</organism>
<evidence type="ECO:0000255" key="1">
    <source>
        <dbReference type="HAMAP-Rule" id="MF_00412"/>
    </source>
</evidence>
<sequence>MTESVLDYMTRLGRAAREASRVIGRASTAQKNRALQAAAAALDAARDALTAANEQDLANGRKNGLEPALLDRLALTPARIDGMITGLRQVASLPDPVGAIRDMSYRPSGIQVGKMRVPLGVIGIIYESRPNVTIDAASLCLKSGNATILRGGSEAIHSNRAIATCIQRGLAEAGLPPAVVQVVETTDREAVGALISMPEYVDVIVPRGGRGLIERISRDARVPVIKHLDGICHIFVDEHADLDKAWRVAFNAKTYRYGICGAMETLLVDQRVAERFLPEMARRFQEKGVELRGCERTRAIIDSKPASEDDWHTEYLDAILSIRIVDGLEQAIEHINHYGSHHTDSIITEHQGQARRFMAEVDSASVMLNTPTCFADGFEYGLGAEIGISTDKLHARGPVGLEGLTCEKYVVIGDGQLRGQEPC</sequence>
<reference key="1">
    <citation type="journal article" date="2006" name="Nat. Biotechnol.">
        <title>Complete genome sequence of the entomopathogenic and metabolically versatile soil bacterium Pseudomonas entomophila.</title>
        <authorList>
            <person name="Vodovar N."/>
            <person name="Vallenet D."/>
            <person name="Cruveiller S."/>
            <person name="Rouy Z."/>
            <person name="Barbe V."/>
            <person name="Acosta C."/>
            <person name="Cattolico L."/>
            <person name="Jubin C."/>
            <person name="Lajus A."/>
            <person name="Segurens B."/>
            <person name="Vacherie B."/>
            <person name="Wincker P."/>
            <person name="Weissenbach J."/>
            <person name="Lemaitre B."/>
            <person name="Medigue C."/>
            <person name="Boccard F."/>
        </authorList>
    </citation>
    <scope>NUCLEOTIDE SEQUENCE [LARGE SCALE GENOMIC DNA]</scope>
    <source>
        <strain>L48</strain>
    </source>
</reference>
<dbReference type="EC" id="1.2.1.41" evidence="1"/>
<dbReference type="EMBL" id="CT573326">
    <property type="protein sequence ID" value="CAK17486.1"/>
    <property type="molecule type" value="Genomic_DNA"/>
</dbReference>
<dbReference type="RefSeq" id="WP_011535848.1">
    <property type="nucleotide sequence ID" value="NC_008027.1"/>
</dbReference>
<dbReference type="SMR" id="Q1I4F0"/>
<dbReference type="STRING" id="384676.PSEEN4830"/>
<dbReference type="GeneID" id="32807789"/>
<dbReference type="KEGG" id="pen:PSEEN4830"/>
<dbReference type="eggNOG" id="COG0014">
    <property type="taxonomic scope" value="Bacteria"/>
</dbReference>
<dbReference type="HOGENOM" id="CLU_030231_0_0_6"/>
<dbReference type="OrthoDB" id="9809970at2"/>
<dbReference type="UniPathway" id="UPA00098">
    <property type="reaction ID" value="UER00360"/>
</dbReference>
<dbReference type="Proteomes" id="UP000000658">
    <property type="component" value="Chromosome"/>
</dbReference>
<dbReference type="GO" id="GO:0005737">
    <property type="term" value="C:cytoplasm"/>
    <property type="evidence" value="ECO:0007669"/>
    <property type="project" value="UniProtKB-SubCell"/>
</dbReference>
<dbReference type="GO" id="GO:0004350">
    <property type="term" value="F:glutamate-5-semialdehyde dehydrogenase activity"/>
    <property type="evidence" value="ECO:0007669"/>
    <property type="project" value="UniProtKB-UniRule"/>
</dbReference>
<dbReference type="GO" id="GO:0050661">
    <property type="term" value="F:NADP binding"/>
    <property type="evidence" value="ECO:0007669"/>
    <property type="project" value="InterPro"/>
</dbReference>
<dbReference type="GO" id="GO:0055129">
    <property type="term" value="P:L-proline biosynthetic process"/>
    <property type="evidence" value="ECO:0007669"/>
    <property type="project" value="UniProtKB-UniRule"/>
</dbReference>
<dbReference type="CDD" id="cd07079">
    <property type="entry name" value="ALDH_F18-19_ProA-GPR"/>
    <property type="match status" value="1"/>
</dbReference>
<dbReference type="FunFam" id="3.40.309.10:FF:000006">
    <property type="entry name" value="Gamma-glutamyl phosphate reductase"/>
    <property type="match status" value="1"/>
</dbReference>
<dbReference type="Gene3D" id="3.40.605.10">
    <property type="entry name" value="Aldehyde Dehydrogenase, Chain A, domain 1"/>
    <property type="match status" value="1"/>
</dbReference>
<dbReference type="Gene3D" id="3.40.309.10">
    <property type="entry name" value="Aldehyde Dehydrogenase, Chain A, domain 2"/>
    <property type="match status" value="1"/>
</dbReference>
<dbReference type="HAMAP" id="MF_00412">
    <property type="entry name" value="ProA"/>
    <property type="match status" value="1"/>
</dbReference>
<dbReference type="InterPro" id="IPR016161">
    <property type="entry name" value="Ald_DH/histidinol_DH"/>
</dbReference>
<dbReference type="InterPro" id="IPR016163">
    <property type="entry name" value="Ald_DH_C"/>
</dbReference>
<dbReference type="InterPro" id="IPR016162">
    <property type="entry name" value="Ald_DH_N"/>
</dbReference>
<dbReference type="InterPro" id="IPR015590">
    <property type="entry name" value="Aldehyde_DH_dom"/>
</dbReference>
<dbReference type="InterPro" id="IPR020593">
    <property type="entry name" value="G-glutamylP_reductase_CS"/>
</dbReference>
<dbReference type="InterPro" id="IPR012134">
    <property type="entry name" value="Glu-5-SA_DH"/>
</dbReference>
<dbReference type="InterPro" id="IPR000965">
    <property type="entry name" value="GPR_dom"/>
</dbReference>
<dbReference type="NCBIfam" id="NF001221">
    <property type="entry name" value="PRK00197.1"/>
    <property type="match status" value="1"/>
</dbReference>
<dbReference type="NCBIfam" id="TIGR00407">
    <property type="entry name" value="proA"/>
    <property type="match status" value="1"/>
</dbReference>
<dbReference type="PANTHER" id="PTHR11063:SF8">
    <property type="entry name" value="DELTA-1-PYRROLINE-5-CARBOXYLATE SYNTHASE"/>
    <property type="match status" value="1"/>
</dbReference>
<dbReference type="PANTHER" id="PTHR11063">
    <property type="entry name" value="GLUTAMATE SEMIALDEHYDE DEHYDROGENASE"/>
    <property type="match status" value="1"/>
</dbReference>
<dbReference type="Pfam" id="PF00171">
    <property type="entry name" value="Aldedh"/>
    <property type="match status" value="1"/>
</dbReference>
<dbReference type="PIRSF" id="PIRSF000151">
    <property type="entry name" value="GPR"/>
    <property type="match status" value="1"/>
</dbReference>
<dbReference type="SUPFAM" id="SSF53720">
    <property type="entry name" value="ALDH-like"/>
    <property type="match status" value="1"/>
</dbReference>
<dbReference type="PROSITE" id="PS01223">
    <property type="entry name" value="PROA"/>
    <property type="match status" value="1"/>
</dbReference>
<name>PROA_PSEE4</name>
<proteinExistence type="inferred from homology"/>